<protein>
    <recommendedName>
        <fullName evidence="1">Acetyl-CoA acetyltransferase</fullName>
        <ecNumber evidence="1">2.3.1.9</ecNumber>
    </recommendedName>
    <alternativeName>
        <fullName evidence="1">Acetoacetyl-CoA thiolase</fullName>
    </alternativeName>
</protein>
<proteinExistence type="inferred from homology"/>
<keyword id="KW-0012">Acyltransferase</keyword>
<keyword id="KW-0963">Cytoplasm</keyword>
<keyword id="KW-0808">Transferase</keyword>
<reference key="1">
    <citation type="journal article" date="1994" name="FEMS Microbiol. Lett.">
        <title>Genes encoding homologues of three consecutive enzymes in the butyrate/butanol-producing pathway of Clostridium acetobutylicum are clustered on the Clostridium difficile chromosome.</title>
        <authorList>
            <person name="Mullany P."/>
            <person name="Clayton C.L."/>
            <person name="Pallen M.J."/>
            <person name="Slone R."/>
            <person name="Al-Saleh A."/>
            <person name="Tabaqchali S."/>
        </authorList>
    </citation>
    <scope>NUCLEOTIDE SEQUENCE [GENOMIC DNA]</scope>
    <source>
        <strain>E</strain>
    </source>
</reference>
<accession>P45362</accession>
<evidence type="ECO:0000250" key="1">
    <source>
        <dbReference type="UniProtKB" id="P45359"/>
    </source>
</evidence>
<evidence type="ECO:0000305" key="2"/>
<name>THLA_CLODI</name>
<comment type="function">
    <text evidence="1">Catalyzes the condensation of two molecules of acetyl-CoA to produce acetoacetyl-CoA.</text>
</comment>
<comment type="catalytic activity">
    <reaction evidence="1">
        <text>2 acetyl-CoA = acetoacetyl-CoA + CoA</text>
        <dbReference type="Rhea" id="RHEA:21036"/>
        <dbReference type="ChEBI" id="CHEBI:57286"/>
        <dbReference type="ChEBI" id="CHEBI:57287"/>
        <dbReference type="ChEBI" id="CHEBI:57288"/>
        <dbReference type="EC" id="2.3.1.9"/>
    </reaction>
</comment>
<comment type="subunit">
    <text evidence="1">Homotetramer.</text>
</comment>
<comment type="subcellular location">
    <subcellularLocation>
        <location evidence="1">Cytoplasm</location>
    </subcellularLocation>
</comment>
<comment type="similarity">
    <text evidence="2">Belongs to the thiolase-like superfamily. Thiolase family.</text>
</comment>
<comment type="sequence caution" evidence="2">
    <conflict type="erroneous initiation">
        <sequence resource="EMBL-CDS" id="CAA56273"/>
    </conflict>
</comment>
<sequence>MREVVIASAARTAVGSFGGAFKSVSAVELGVTAAKEAIKRANITPDMIDESLLGGVLTAGLGQNIARQIALGAGIPVEKPAMTINIVCGSGLRSWRALRTRTGPRRR</sequence>
<organism>
    <name type="scientific">Clostridioides difficile</name>
    <name type="common">Peptoclostridium difficile</name>
    <dbReference type="NCBI Taxonomy" id="1496"/>
    <lineage>
        <taxon>Bacteria</taxon>
        <taxon>Bacillati</taxon>
        <taxon>Bacillota</taxon>
        <taxon>Clostridia</taxon>
        <taxon>Peptostreptococcales</taxon>
        <taxon>Peptostreptococcaceae</taxon>
        <taxon>Clostridioides</taxon>
    </lineage>
</organism>
<feature type="chain" id="PRO_0000206404" description="Acetyl-CoA acetyltransferase">
    <location>
        <begin position="1"/>
        <end position="107" status="greater than"/>
    </location>
</feature>
<feature type="active site" description="Acyl-thioester intermediate" evidence="1">
    <location>
        <position position="88"/>
    </location>
</feature>
<feature type="non-terminal residue">
    <location>
        <position position="107"/>
    </location>
</feature>
<gene>
    <name type="primary">thi</name>
</gene>
<dbReference type="EC" id="2.3.1.9" evidence="1"/>
<dbReference type="EMBL" id="X79899">
    <property type="protein sequence ID" value="CAA56273.1"/>
    <property type="status" value="ALT_INIT"/>
    <property type="molecule type" value="Genomic_DNA"/>
</dbReference>
<dbReference type="PIR" id="I40680">
    <property type="entry name" value="I40680"/>
</dbReference>
<dbReference type="SMR" id="P45362"/>
<dbReference type="GO" id="GO:0005737">
    <property type="term" value="C:cytoplasm"/>
    <property type="evidence" value="ECO:0007669"/>
    <property type="project" value="UniProtKB-SubCell"/>
</dbReference>
<dbReference type="GO" id="GO:0003985">
    <property type="term" value="F:acetyl-CoA C-acetyltransferase activity"/>
    <property type="evidence" value="ECO:0007669"/>
    <property type="project" value="UniProtKB-EC"/>
</dbReference>
<dbReference type="Gene3D" id="3.40.47.10">
    <property type="match status" value="1"/>
</dbReference>
<dbReference type="InterPro" id="IPR016039">
    <property type="entry name" value="Thiolase-like"/>
</dbReference>
<dbReference type="InterPro" id="IPR020616">
    <property type="entry name" value="Thiolase_N"/>
</dbReference>
<dbReference type="PANTHER" id="PTHR18919:SF107">
    <property type="entry name" value="ACETYL-COA ACETYLTRANSFERASE, CYTOSOLIC"/>
    <property type="match status" value="1"/>
</dbReference>
<dbReference type="PANTHER" id="PTHR18919">
    <property type="entry name" value="ACETYL-COA C-ACYLTRANSFERASE"/>
    <property type="match status" value="1"/>
</dbReference>
<dbReference type="Pfam" id="PF00108">
    <property type="entry name" value="Thiolase_N"/>
    <property type="match status" value="1"/>
</dbReference>
<dbReference type="SUPFAM" id="SSF53901">
    <property type="entry name" value="Thiolase-like"/>
    <property type="match status" value="1"/>
</dbReference>